<feature type="chain" id="PRO_1000193181" description="S-adenosylmethionine decarboxylase beta chain" evidence="1">
    <location>
        <begin position="1"/>
        <end position="62"/>
    </location>
</feature>
<feature type="chain" id="PRO_1000193182" description="S-adenosylmethionine decarboxylase alpha chain" evidence="1">
    <location>
        <begin position="63"/>
        <end position="116"/>
    </location>
</feature>
<feature type="active site" description="Schiff-base intermediate with substrate; via pyruvic acid" evidence="1">
    <location>
        <position position="63"/>
    </location>
</feature>
<feature type="active site" description="Proton acceptor; for processing activity" evidence="1">
    <location>
        <position position="68"/>
    </location>
</feature>
<feature type="active site" description="Proton donor; for catalytic activity" evidence="1">
    <location>
        <position position="83"/>
    </location>
</feature>
<feature type="site" description="Cleavage (non-hydrolytic); by autolysis" evidence="1">
    <location>
        <begin position="62"/>
        <end position="63"/>
    </location>
</feature>
<feature type="modified residue" description="Pyruvic acid (Ser); by autocatalysis" evidence="1">
    <location>
        <position position="63"/>
    </location>
</feature>
<sequence length="116" mass="13428">MKYSGYHLVIDLFGCNFDQLENTEYIIEMLKKLARALDTKIVAKAFHKFHPQGFSGALIISESHITIHTWPEDAYIGIDIFTCSKCFDSRKIVAYLKENLIFKKVEIKEILRGKID</sequence>
<evidence type="ECO:0000255" key="1">
    <source>
        <dbReference type="HAMAP-Rule" id="MF_00464"/>
    </source>
</evidence>
<organism>
    <name type="scientific">Clostridium botulinum (strain Langeland / NCTC 10281 / Type F)</name>
    <dbReference type="NCBI Taxonomy" id="441772"/>
    <lineage>
        <taxon>Bacteria</taxon>
        <taxon>Bacillati</taxon>
        <taxon>Bacillota</taxon>
        <taxon>Clostridia</taxon>
        <taxon>Eubacteriales</taxon>
        <taxon>Clostridiaceae</taxon>
        <taxon>Clostridium</taxon>
    </lineage>
</organism>
<name>SPEH_CLOBL</name>
<accession>A7GIV2</accession>
<proteinExistence type="inferred from homology"/>
<comment type="function">
    <text evidence="1">Catalyzes the decarboxylation of S-adenosylmethionine to S-adenosylmethioninamine (dcAdoMet), the propylamine donor required for the synthesis of the polyamines spermine and spermidine from the diamine putrescine.</text>
</comment>
<comment type="catalytic activity">
    <reaction evidence="1">
        <text>S-adenosyl-L-methionine + H(+) = S-adenosyl 3-(methylsulfanyl)propylamine + CO2</text>
        <dbReference type="Rhea" id="RHEA:15981"/>
        <dbReference type="ChEBI" id="CHEBI:15378"/>
        <dbReference type="ChEBI" id="CHEBI:16526"/>
        <dbReference type="ChEBI" id="CHEBI:57443"/>
        <dbReference type="ChEBI" id="CHEBI:59789"/>
        <dbReference type="EC" id="4.1.1.50"/>
    </reaction>
</comment>
<comment type="cofactor">
    <cofactor evidence="1">
        <name>pyruvate</name>
        <dbReference type="ChEBI" id="CHEBI:15361"/>
    </cofactor>
    <text evidence="1">Binds 1 pyruvoyl group covalently per subunit.</text>
</comment>
<comment type="pathway">
    <text evidence="1">Amine and polyamine biosynthesis; S-adenosylmethioninamine biosynthesis; S-adenosylmethioninamine from S-adenosyl-L-methionine: step 1/1.</text>
</comment>
<comment type="subunit">
    <text evidence="1">Heterotetramer of two alpha and two beta chains arranged as a dimer of alpha/beta heterodimers.</text>
</comment>
<comment type="PTM">
    <text evidence="1">Is synthesized initially as an inactive proenzyme. Formation of the active enzyme involves a self-maturation process in which the active site pyruvoyl group is generated from an internal serine residue via an autocatalytic post-translational modification. Two non-identical subunits are generated from the proenzyme in this reaction, and the pyruvate is formed at the N-terminus of the alpha chain, which is derived from the carboxyl end of the proenzyme. The post-translation cleavage follows an unusual pathway, termed non-hydrolytic serinolysis, in which the side chain hydroxyl group of the serine supplies its oxygen atom to form the C-terminus of the beta chain, while the remainder of the serine residue undergoes an oxidative deamination to produce ammonia and the pyruvoyl group blocking the N-terminus of the alpha chain.</text>
</comment>
<comment type="similarity">
    <text evidence="1">Belongs to the prokaryotic AdoMetDC family. Type 1 subfamily.</text>
</comment>
<protein>
    <recommendedName>
        <fullName evidence="1">S-adenosylmethionine decarboxylase proenzyme</fullName>
        <shortName evidence="1">AdoMetDC</shortName>
        <shortName evidence="1">SAMDC</shortName>
        <ecNumber evidence="1">4.1.1.50</ecNumber>
    </recommendedName>
    <component>
        <recommendedName>
            <fullName evidence="1">S-adenosylmethionine decarboxylase beta chain</fullName>
        </recommendedName>
    </component>
    <component>
        <recommendedName>
            <fullName evidence="1">S-adenosylmethionine decarboxylase alpha chain</fullName>
        </recommendedName>
    </component>
</protein>
<keyword id="KW-0068">Autocatalytic cleavage</keyword>
<keyword id="KW-0210">Decarboxylase</keyword>
<keyword id="KW-0456">Lyase</keyword>
<keyword id="KW-0620">Polyamine biosynthesis</keyword>
<keyword id="KW-0670">Pyruvate</keyword>
<keyword id="KW-0949">S-adenosyl-L-methionine</keyword>
<keyword id="KW-0704">Schiff base</keyword>
<keyword id="KW-0745">Spermidine biosynthesis</keyword>
<keyword id="KW-0865">Zymogen</keyword>
<gene>
    <name evidence="1" type="primary">speH</name>
    <name type="ordered locus">CLI_3539</name>
</gene>
<dbReference type="EC" id="4.1.1.50" evidence="1"/>
<dbReference type="EMBL" id="CP000728">
    <property type="protein sequence ID" value="ABS41905.1"/>
    <property type="molecule type" value="Genomic_DNA"/>
</dbReference>
<dbReference type="RefSeq" id="WP_003401423.1">
    <property type="nucleotide sequence ID" value="NC_009699.1"/>
</dbReference>
<dbReference type="SMR" id="A7GIV2"/>
<dbReference type="KEGG" id="cbf:CLI_3539"/>
<dbReference type="HOGENOM" id="CLU_125470_2_3_9"/>
<dbReference type="UniPathway" id="UPA00331">
    <property type="reaction ID" value="UER00451"/>
</dbReference>
<dbReference type="Proteomes" id="UP000002410">
    <property type="component" value="Chromosome"/>
</dbReference>
<dbReference type="GO" id="GO:0005829">
    <property type="term" value="C:cytosol"/>
    <property type="evidence" value="ECO:0007669"/>
    <property type="project" value="TreeGrafter"/>
</dbReference>
<dbReference type="GO" id="GO:0004014">
    <property type="term" value="F:adenosylmethionine decarboxylase activity"/>
    <property type="evidence" value="ECO:0007669"/>
    <property type="project" value="UniProtKB-UniRule"/>
</dbReference>
<dbReference type="GO" id="GO:0008295">
    <property type="term" value="P:spermidine biosynthetic process"/>
    <property type="evidence" value="ECO:0007669"/>
    <property type="project" value="UniProtKB-UniRule"/>
</dbReference>
<dbReference type="FunFam" id="3.60.90.10:FF:000012">
    <property type="entry name" value="S-adenosylmethionine decarboxylase proenzyme"/>
    <property type="match status" value="1"/>
</dbReference>
<dbReference type="Gene3D" id="3.60.90.10">
    <property type="entry name" value="S-adenosylmethionine decarboxylase"/>
    <property type="match status" value="1"/>
</dbReference>
<dbReference type="HAMAP" id="MF_00464">
    <property type="entry name" value="AdoMetDC_1"/>
    <property type="match status" value="1"/>
</dbReference>
<dbReference type="InterPro" id="IPR003826">
    <property type="entry name" value="AdoMetDC_fam_prok"/>
</dbReference>
<dbReference type="InterPro" id="IPR016067">
    <property type="entry name" value="S-AdoMet_deCO2ase_core"/>
</dbReference>
<dbReference type="InterPro" id="IPR017716">
    <property type="entry name" value="S-AdoMet_deCOase_pro-enz"/>
</dbReference>
<dbReference type="NCBIfam" id="TIGR03330">
    <property type="entry name" value="SAM_DCase_Bsu"/>
    <property type="match status" value="1"/>
</dbReference>
<dbReference type="PANTHER" id="PTHR33866">
    <property type="entry name" value="S-ADENOSYLMETHIONINE DECARBOXYLASE PROENZYME"/>
    <property type="match status" value="1"/>
</dbReference>
<dbReference type="PANTHER" id="PTHR33866:SF2">
    <property type="entry name" value="S-ADENOSYLMETHIONINE DECARBOXYLASE PROENZYME"/>
    <property type="match status" value="1"/>
</dbReference>
<dbReference type="Pfam" id="PF02675">
    <property type="entry name" value="AdoMet_dc"/>
    <property type="match status" value="1"/>
</dbReference>
<dbReference type="SUPFAM" id="SSF56276">
    <property type="entry name" value="S-adenosylmethionine decarboxylase"/>
    <property type="match status" value="1"/>
</dbReference>
<reference key="1">
    <citation type="submission" date="2007-06" db="EMBL/GenBank/DDBJ databases">
        <authorList>
            <person name="Brinkac L.M."/>
            <person name="Daugherty S."/>
            <person name="Dodson R.J."/>
            <person name="Madupu R."/>
            <person name="Brown J.L."/>
            <person name="Bruce D."/>
            <person name="Detter C."/>
            <person name="Munk C."/>
            <person name="Smith L.A."/>
            <person name="Smith T.J."/>
            <person name="White O."/>
            <person name="Brettin T.S."/>
        </authorList>
    </citation>
    <scope>NUCLEOTIDE SEQUENCE [LARGE SCALE GENOMIC DNA]</scope>
    <source>
        <strain>Langeland / NCTC 10281 / Type F</strain>
    </source>
</reference>